<protein>
    <recommendedName>
        <fullName evidence="1">Imidazoleglycerol-phosphate dehydratase</fullName>
        <shortName evidence="1">IGPD</shortName>
        <ecNumber evidence="1">4.2.1.19</ecNumber>
    </recommendedName>
</protein>
<accession>B1ZAD1</accession>
<comment type="catalytic activity">
    <reaction evidence="1">
        <text>D-erythro-1-(imidazol-4-yl)glycerol 3-phosphate = 3-(imidazol-4-yl)-2-oxopropyl phosphate + H2O</text>
        <dbReference type="Rhea" id="RHEA:11040"/>
        <dbReference type="ChEBI" id="CHEBI:15377"/>
        <dbReference type="ChEBI" id="CHEBI:57766"/>
        <dbReference type="ChEBI" id="CHEBI:58278"/>
        <dbReference type="EC" id="4.2.1.19"/>
    </reaction>
</comment>
<comment type="pathway">
    <text evidence="1">Amino-acid biosynthesis; L-histidine biosynthesis; L-histidine from 5-phospho-alpha-D-ribose 1-diphosphate: step 6/9.</text>
</comment>
<comment type="subcellular location">
    <subcellularLocation>
        <location evidence="1">Cytoplasm</location>
    </subcellularLocation>
</comment>
<comment type="similarity">
    <text evidence="1">Belongs to the imidazoleglycerol-phosphate dehydratase family.</text>
</comment>
<feature type="chain" id="PRO_1000092701" description="Imidazoleglycerol-phosphate dehydratase">
    <location>
        <begin position="1"/>
        <end position="195"/>
    </location>
</feature>
<proteinExistence type="inferred from homology"/>
<evidence type="ECO:0000255" key="1">
    <source>
        <dbReference type="HAMAP-Rule" id="MF_00076"/>
    </source>
</evidence>
<reference key="1">
    <citation type="submission" date="2008-04" db="EMBL/GenBank/DDBJ databases">
        <title>Complete sequence of chromosome of Methylobacterium populi BJ001.</title>
        <authorList>
            <consortium name="US DOE Joint Genome Institute"/>
            <person name="Copeland A."/>
            <person name="Lucas S."/>
            <person name="Lapidus A."/>
            <person name="Glavina del Rio T."/>
            <person name="Dalin E."/>
            <person name="Tice H."/>
            <person name="Bruce D."/>
            <person name="Goodwin L."/>
            <person name="Pitluck S."/>
            <person name="Chertkov O."/>
            <person name="Brettin T."/>
            <person name="Detter J.C."/>
            <person name="Han C."/>
            <person name="Kuske C.R."/>
            <person name="Schmutz J."/>
            <person name="Larimer F."/>
            <person name="Land M."/>
            <person name="Hauser L."/>
            <person name="Kyrpides N."/>
            <person name="Mikhailova N."/>
            <person name="Marx C."/>
            <person name="Richardson P."/>
        </authorList>
    </citation>
    <scope>NUCLEOTIDE SEQUENCE [LARGE SCALE GENOMIC DNA]</scope>
    <source>
        <strain>ATCC BAA-705 / NCIMB 13946 / BJ001</strain>
    </source>
</reference>
<name>HIS7_METPB</name>
<keyword id="KW-0028">Amino-acid biosynthesis</keyword>
<keyword id="KW-0963">Cytoplasm</keyword>
<keyword id="KW-0368">Histidine biosynthesis</keyword>
<keyword id="KW-0456">Lyase</keyword>
<organism>
    <name type="scientific">Methylorubrum populi (strain ATCC BAA-705 / NCIMB 13946 / BJ001)</name>
    <name type="common">Methylobacterium populi</name>
    <dbReference type="NCBI Taxonomy" id="441620"/>
    <lineage>
        <taxon>Bacteria</taxon>
        <taxon>Pseudomonadati</taxon>
        <taxon>Pseudomonadota</taxon>
        <taxon>Alphaproteobacteria</taxon>
        <taxon>Hyphomicrobiales</taxon>
        <taxon>Methylobacteriaceae</taxon>
        <taxon>Methylorubrum</taxon>
    </lineage>
</organism>
<gene>
    <name evidence="1" type="primary">hisB</name>
    <name type="ordered locus">Mpop_2478</name>
</gene>
<dbReference type="EC" id="4.2.1.19" evidence="1"/>
<dbReference type="EMBL" id="CP001029">
    <property type="protein sequence ID" value="ACB80639.1"/>
    <property type="molecule type" value="Genomic_DNA"/>
</dbReference>
<dbReference type="RefSeq" id="WP_012454369.1">
    <property type="nucleotide sequence ID" value="NC_010725.1"/>
</dbReference>
<dbReference type="SMR" id="B1ZAD1"/>
<dbReference type="STRING" id="441620.Mpop_2478"/>
<dbReference type="KEGG" id="mpo:Mpop_2478"/>
<dbReference type="eggNOG" id="COG0131">
    <property type="taxonomic scope" value="Bacteria"/>
</dbReference>
<dbReference type="HOGENOM" id="CLU_044308_2_0_5"/>
<dbReference type="OrthoDB" id="9813612at2"/>
<dbReference type="UniPathway" id="UPA00031">
    <property type="reaction ID" value="UER00011"/>
</dbReference>
<dbReference type="Proteomes" id="UP000007136">
    <property type="component" value="Chromosome"/>
</dbReference>
<dbReference type="GO" id="GO:0005737">
    <property type="term" value="C:cytoplasm"/>
    <property type="evidence" value="ECO:0007669"/>
    <property type="project" value="UniProtKB-SubCell"/>
</dbReference>
<dbReference type="GO" id="GO:0004424">
    <property type="term" value="F:imidazoleglycerol-phosphate dehydratase activity"/>
    <property type="evidence" value="ECO:0007669"/>
    <property type="project" value="UniProtKB-UniRule"/>
</dbReference>
<dbReference type="GO" id="GO:0000105">
    <property type="term" value="P:L-histidine biosynthetic process"/>
    <property type="evidence" value="ECO:0007669"/>
    <property type="project" value="UniProtKB-UniRule"/>
</dbReference>
<dbReference type="CDD" id="cd07914">
    <property type="entry name" value="IGPD"/>
    <property type="match status" value="1"/>
</dbReference>
<dbReference type="FunFam" id="3.30.230.40:FF:000001">
    <property type="entry name" value="Imidazoleglycerol-phosphate dehydratase HisB"/>
    <property type="match status" value="1"/>
</dbReference>
<dbReference type="FunFam" id="3.30.230.40:FF:000003">
    <property type="entry name" value="Imidazoleglycerol-phosphate dehydratase HisB"/>
    <property type="match status" value="1"/>
</dbReference>
<dbReference type="Gene3D" id="3.30.230.40">
    <property type="entry name" value="Imidazole glycerol phosphate dehydratase, domain 1"/>
    <property type="match status" value="2"/>
</dbReference>
<dbReference type="HAMAP" id="MF_00076">
    <property type="entry name" value="HisB"/>
    <property type="match status" value="1"/>
</dbReference>
<dbReference type="InterPro" id="IPR038494">
    <property type="entry name" value="IGPD_sf"/>
</dbReference>
<dbReference type="InterPro" id="IPR000807">
    <property type="entry name" value="ImidazoleglycerolP_deHydtase"/>
</dbReference>
<dbReference type="InterPro" id="IPR020565">
    <property type="entry name" value="ImidazoleglycerP_deHydtase_CS"/>
</dbReference>
<dbReference type="InterPro" id="IPR020568">
    <property type="entry name" value="Ribosomal_Su5_D2-typ_SF"/>
</dbReference>
<dbReference type="NCBIfam" id="NF002109">
    <property type="entry name" value="PRK00951.1-5"/>
    <property type="match status" value="1"/>
</dbReference>
<dbReference type="NCBIfam" id="NF002111">
    <property type="entry name" value="PRK00951.2-1"/>
    <property type="match status" value="1"/>
</dbReference>
<dbReference type="NCBIfam" id="NF002114">
    <property type="entry name" value="PRK00951.2-4"/>
    <property type="match status" value="1"/>
</dbReference>
<dbReference type="NCBIfam" id="NF002116">
    <property type="entry name" value="PRK00951.2-6"/>
    <property type="match status" value="1"/>
</dbReference>
<dbReference type="PANTHER" id="PTHR23133:SF2">
    <property type="entry name" value="IMIDAZOLEGLYCEROL-PHOSPHATE DEHYDRATASE"/>
    <property type="match status" value="1"/>
</dbReference>
<dbReference type="PANTHER" id="PTHR23133">
    <property type="entry name" value="IMIDAZOLEGLYCEROL-PHOSPHATE DEHYDRATASE HIS7"/>
    <property type="match status" value="1"/>
</dbReference>
<dbReference type="Pfam" id="PF00475">
    <property type="entry name" value="IGPD"/>
    <property type="match status" value="1"/>
</dbReference>
<dbReference type="SUPFAM" id="SSF54211">
    <property type="entry name" value="Ribosomal protein S5 domain 2-like"/>
    <property type="match status" value="2"/>
</dbReference>
<dbReference type="PROSITE" id="PS00954">
    <property type="entry name" value="IGP_DEHYDRATASE_1"/>
    <property type="match status" value="1"/>
</dbReference>
<dbReference type="PROSITE" id="PS00955">
    <property type="entry name" value="IGP_DEHYDRATASE_2"/>
    <property type="match status" value="1"/>
</dbReference>
<sequence>MRTASISRRTAETDVSVSIDLDGTGKATIATSVGFLDHMLELFARHGLFDVTIKVEGDLHVDQHHTTEDTGIALGQAVAKALGDKRGIARYADIHLPMDETLSRIAIDISGRPFLVFRTTFRVEKIGQFDTELVREFFQAFAMNAGITLHVETLYGDNAHHIAESVFKGLARALRKAVAIDPREDGRVPSTKGSL</sequence>